<feature type="chain" id="PRO_0000263618" description="Uncharacterized protein encoded by LINC01561">
    <location>
        <begin position="1"/>
        <end position="128"/>
    </location>
</feature>
<feature type="region of interest" description="Disordered" evidence="1">
    <location>
        <begin position="25"/>
        <end position="61"/>
    </location>
</feature>
<feature type="compositionally biased region" description="Polar residues" evidence="1">
    <location>
        <begin position="44"/>
        <end position="61"/>
    </location>
</feature>
<name>CJ085_HUMAN</name>
<dbReference type="EMBL" id="AK094721">
    <property type="protein sequence ID" value="BAC04408.1"/>
    <property type="molecule type" value="mRNA"/>
</dbReference>
<dbReference type="EMBL" id="BC108662">
    <property type="protein sequence ID" value="AAI08663.1"/>
    <property type="molecule type" value="mRNA"/>
</dbReference>
<dbReference type="IntAct" id="Q8N1V8">
    <property type="interactions" value="1"/>
</dbReference>
<dbReference type="BioMuta" id="HGNC:31365"/>
<dbReference type="jPOST" id="Q8N1V8"/>
<dbReference type="MassIVE" id="Q8N1V8"/>
<dbReference type="PeptideAtlas" id="Q8N1V8"/>
<dbReference type="AGR" id="HGNC:31365"/>
<dbReference type="GeneCards" id="LINC01561"/>
<dbReference type="HGNC" id="HGNC:31365">
    <property type="gene designation" value="LINC01561"/>
</dbReference>
<dbReference type="neXtProt" id="NX_Q8N1V8"/>
<dbReference type="InParanoid" id="Q8N1V8"/>
<dbReference type="PAN-GO" id="Q8N1V8">
    <property type="GO annotations" value="0 GO annotations based on evolutionary models"/>
</dbReference>
<dbReference type="PhylomeDB" id="Q8N1V8"/>
<dbReference type="PathwayCommons" id="Q8N1V8"/>
<dbReference type="Pharos" id="Q8N1V8">
    <property type="development level" value="Tdark"/>
</dbReference>
<dbReference type="Proteomes" id="UP000005640">
    <property type="component" value="Unplaced"/>
</dbReference>
<dbReference type="RNAct" id="Q8N1V8">
    <property type="molecule type" value="protein"/>
</dbReference>
<evidence type="ECO:0000256" key="1">
    <source>
        <dbReference type="SAM" id="MobiDB-lite"/>
    </source>
</evidence>
<evidence type="ECO:0000305" key="2"/>
<evidence type="ECO:0000312" key="3">
    <source>
        <dbReference type="HGNC" id="HGNC:31365"/>
    </source>
</evidence>
<comment type="interaction">
    <interactant intactId="EBI-12833332">
        <id>Q8N1V8</id>
    </interactant>
    <interactant intactId="EBI-6137441">
        <id>O75879</id>
        <label>GATB</label>
    </interactant>
    <organismsDiffer>false</organismsDiffer>
    <experiments>2</experiments>
</comment>
<comment type="caution">
    <text evidence="2">Product of a dubious CDS prediction. May be a long intergenic non-protein coding RNA. No experimental confirmation available.</text>
</comment>
<gene>
    <name evidence="3" type="primary">LINC01561</name>
    <name evidence="3" type="synonym">C10orf85</name>
</gene>
<accession>Q8N1V8</accession>
<protein>
    <recommendedName>
        <fullName evidence="3">Uncharacterized protein encoded by LINC01561</fullName>
    </recommendedName>
</protein>
<reference key="1">
    <citation type="journal article" date="2004" name="Nat. Genet.">
        <title>Complete sequencing and characterization of 21,243 full-length human cDNAs.</title>
        <authorList>
            <person name="Ota T."/>
            <person name="Suzuki Y."/>
            <person name="Nishikawa T."/>
            <person name="Otsuki T."/>
            <person name="Sugiyama T."/>
            <person name="Irie R."/>
            <person name="Wakamatsu A."/>
            <person name="Hayashi K."/>
            <person name="Sato H."/>
            <person name="Nagai K."/>
            <person name="Kimura K."/>
            <person name="Makita H."/>
            <person name="Sekine M."/>
            <person name="Obayashi M."/>
            <person name="Nishi T."/>
            <person name="Shibahara T."/>
            <person name="Tanaka T."/>
            <person name="Ishii S."/>
            <person name="Yamamoto J."/>
            <person name="Saito K."/>
            <person name="Kawai Y."/>
            <person name="Isono Y."/>
            <person name="Nakamura Y."/>
            <person name="Nagahari K."/>
            <person name="Murakami K."/>
            <person name="Yasuda T."/>
            <person name="Iwayanagi T."/>
            <person name="Wagatsuma M."/>
            <person name="Shiratori A."/>
            <person name="Sudo H."/>
            <person name="Hosoiri T."/>
            <person name="Kaku Y."/>
            <person name="Kodaira H."/>
            <person name="Kondo H."/>
            <person name="Sugawara M."/>
            <person name="Takahashi M."/>
            <person name="Kanda K."/>
            <person name="Yokoi T."/>
            <person name="Furuya T."/>
            <person name="Kikkawa E."/>
            <person name="Omura Y."/>
            <person name="Abe K."/>
            <person name="Kamihara K."/>
            <person name="Katsuta N."/>
            <person name="Sato K."/>
            <person name="Tanikawa M."/>
            <person name="Yamazaki M."/>
            <person name="Ninomiya K."/>
            <person name="Ishibashi T."/>
            <person name="Yamashita H."/>
            <person name="Murakawa K."/>
            <person name="Fujimori K."/>
            <person name="Tanai H."/>
            <person name="Kimata M."/>
            <person name="Watanabe M."/>
            <person name="Hiraoka S."/>
            <person name="Chiba Y."/>
            <person name="Ishida S."/>
            <person name="Ono Y."/>
            <person name="Takiguchi S."/>
            <person name="Watanabe S."/>
            <person name="Yosida M."/>
            <person name="Hotuta T."/>
            <person name="Kusano J."/>
            <person name="Kanehori K."/>
            <person name="Takahashi-Fujii A."/>
            <person name="Hara H."/>
            <person name="Tanase T.-O."/>
            <person name="Nomura Y."/>
            <person name="Togiya S."/>
            <person name="Komai F."/>
            <person name="Hara R."/>
            <person name="Takeuchi K."/>
            <person name="Arita M."/>
            <person name="Imose N."/>
            <person name="Musashino K."/>
            <person name="Yuuki H."/>
            <person name="Oshima A."/>
            <person name="Sasaki N."/>
            <person name="Aotsuka S."/>
            <person name="Yoshikawa Y."/>
            <person name="Matsunawa H."/>
            <person name="Ichihara T."/>
            <person name="Shiohata N."/>
            <person name="Sano S."/>
            <person name="Moriya S."/>
            <person name="Momiyama H."/>
            <person name="Satoh N."/>
            <person name="Takami S."/>
            <person name="Terashima Y."/>
            <person name="Suzuki O."/>
            <person name="Nakagawa S."/>
            <person name="Senoh A."/>
            <person name="Mizoguchi H."/>
            <person name="Goto Y."/>
            <person name="Shimizu F."/>
            <person name="Wakebe H."/>
            <person name="Hishigaki H."/>
            <person name="Watanabe T."/>
            <person name="Sugiyama A."/>
            <person name="Takemoto M."/>
            <person name="Kawakami B."/>
            <person name="Yamazaki M."/>
            <person name="Watanabe K."/>
            <person name="Kumagai A."/>
            <person name="Itakura S."/>
            <person name="Fukuzumi Y."/>
            <person name="Fujimori Y."/>
            <person name="Komiyama M."/>
            <person name="Tashiro H."/>
            <person name="Tanigami A."/>
            <person name="Fujiwara T."/>
            <person name="Ono T."/>
            <person name="Yamada K."/>
            <person name="Fujii Y."/>
            <person name="Ozaki K."/>
            <person name="Hirao M."/>
            <person name="Ohmori Y."/>
            <person name="Kawabata A."/>
            <person name="Hikiji T."/>
            <person name="Kobatake N."/>
            <person name="Inagaki H."/>
            <person name="Ikema Y."/>
            <person name="Okamoto S."/>
            <person name="Okitani R."/>
            <person name="Kawakami T."/>
            <person name="Noguchi S."/>
            <person name="Itoh T."/>
            <person name="Shigeta K."/>
            <person name="Senba T."/>
            <person name="Matsumura K."/>
            <person name="Nakajima Y."/>
            <person name="Mizuno T."/>
            <person name="Morinaga M."/>
            <person name="Sasaki M."/>
            <person name="Togashi T."/>
            <person name="Oyama M."/>
            <person name="Hata H."/>
            <person name="Watanabe M."/>
            <person name="Komatsu T."/>
            <person name="Mizushima-Sugano J."/>
            <person name="Satoh T."/>
            <person name="Shirai Y."/>
            <person name="Takahashi Y."/>
            <person name="Nakagawa K."/>
            <person name="Okumura K."/>
            <person name="Nagase T."/>
            <person name="Nomura N."/>
            <person name="Kikuchi H."/>
            <person name="Masuho Y."/>
            <person name="Yamashita R."/>
            <person name="Nakai K."/>
            <person name="Yada T."/>
            <person name="Nakamura Y."/>
            <person name="Ohara O."/>
            <person name="Isogai T."/>
            <person name="Sugano S."/>
        </authorList>
    </citation>
    <scope>NUCLEOTIDE SEQUENCE [LARGE SCALE MRNA]</scope>
    <source>
        <tissue>Amygdala</tissue>
    </source>
</reference>
<reference key="2">
    <citation type="journal article" date="2004" name="Genome Res.">
        <title>The status, quality, and expansion of the NIH full-length cDNA project: the Mammalian Gene Collection (MGC).</title>
        <authorList>
            <consortium name="The MGC Project Team"/>
        </authorList>
    </citation>
    <scope>NUCLEOTIDE SEQUENCE [LARGE SCALE MRNA]</scope>
    <source>
        <tissue>Skin</tissue>
    </source>
</reference>
<sequence>MAWRVPGVRPASTFFPQVLRASSELPNRLPEGSTVGPKPDSSWEAGSQGNWGLTSSGAGQDSSAQKLGILSVQISLKIWTWEKPSGWGHLHAAVTGASCCSPLSQGGAICLVTAPQDKPDCSPCTSGH</sequence>
<organism>
    <name type="scientific">Homo sapiens</name>
    <name type="common">Human</name>
    <dbReference type="NCBI Taxonomy" id="9606"/>
    <lineage>
        <taxon>Eukaryota</taxon>
        <taxon>Metazoa</taxon>
        <taxon>Chordata</taxon>
        <taxon>Craniata</taxon>
        <taxon>Vertebrata</taxon>
        <taxon>Euteleostomi</taxon>
        <taxon>Mammalia</taxon>
        <taxon>Eutheria</taxon>
        <taxon>Euarchontoglires</taxon>
        <taxon>Primates</taxon>
        <taxon>Haplorrhini</taxon>
        <taxon>Catarrhini</taxon>
        <taxon>Hominidae</taxon>
        <taxon>Homo</taxon>
    </lineage>
</organism>
<proteinExistence type="uncertain"/>
<keyword id="KW-1185">Reference proteome</keyword>